<accession>Q7UZH5</accession>
<protein>
    <recommendedName>
        <fullName evidence="1">7-cyano-7-deazaguanine synthase</fullName>
        <ecNumber evidence="1">6.3.4.20</ecNumber>
    </recommendedName>
    <alternativeName>
        <fullName evidence="1">7-cyano-7-carbaguanine synthase</fullName>
    </alternativeName>
    <alternativeName>
        <fullName evidence="1">PreQ(0) synthase</fullName>
    </alternativeName>
    <alternativeName>
        <fullName evidence="1">Queuosine biosynthesis protein QueC</fullName>
    </alternativeName>
</protein>
<sequence>MDLKNKSAVILLSGGLDSSTVTGLAKASKAKIFGLSFDYGQRHKKELDSAFTIANHFEIEEFKIVKLDLSLWGGSSLTDIKKDLPIDGIQQNTIPNTYVPGRNTIFISVALSYAEAINADLIGLGVNALDYSGYPDCRPDYIKKFQELANLANKRGREENPIKLWTPLLDLNKEDIIQLAFDNNVPLEKTWSCYSGNLEPCGKCDSCRIRQTAYKKWQIKKNEN</sequence>
<gene>
    <name evidence="1" type="primary">queC</name>
    <name type="ordered locus">PMM1691</name>
</gene>
<evidence type="ECO:0000255" key="1">
    <source>
        <dbReference type="HAMAP-Rule" id="MF_01633"/>
    </source>
</evidence>
<proteinExistence type="inferred from homology"/>
<organism>
    <name type="scientific">Prochlorococcus marinus subsp. pastoris (strain CCMP1986 / NIES-2087 / MED4)</name>
    <dbReference type="NCBI Taxonomy" id="59919"/>
    <lineage>
        <taxon>Bacteria</taxon>
        <taxon>Bacillati</taxon>
        <taxon>Cyanobacteriota</taxon>
        <taxon>Cyanophyceae</taxon>
        <taxon>Synechococcales</taxon>
        <taxon>Prochlorococcaceae</taxon>
        <taxon>Prochlorococcus</taxon>
    </lineage>
</organism>
<dbReference type="EC" id="6.3.4.20" evidence="1"/>
<dbReference type="EMBL" id="BX548174">
    <property type="protein sequence ID" value="CAE20150.1"/>
    <property type="molecule type" value="Genomic_DNA"/>
</dbReference>
<dbReference type="RefSeq" id="WP_011133318.1">
    <property type="nucleotide sequence ID" value="NC_005072.1"/>
</dbReference>
<dbReference type="SMR" id="Q7UZH5"/>
<dbReference type="STRING" id="59919.PMM1691"/>
<dbReference type="KEGG" id="pmm:PMM1691"/>
<dbReference type="eggNOG" id="COG0603">
    <property type="taxonomic scope" value="Bacteria"/>
</dbReference>
<dbReference type="HOGENOM" id="CLU_081854_1_0_3"/>
<dbReference type="OrthoDB" id="9789567at2"/>
<dbReference type="UniPathway" id="UPA00391"/>
<dbReference type="Proteomes" id="UP000001026">
    <property type="component" value="Chromosome"/>
</dbReference>
<dbReference type="GO" id="GO:0005524">
    <property type="term" value="F:ATP binding"/>
    <property type="evidence" value="ECO:0007669"/>
    <property type="project" value="UniProtKB-UniRule"/>
</dbReference>
<dbReference type="GO" id="GO:0016879">
    <property type="term" value="F:ligase activity, forming carbon-nitrogen bonds"/>
    <property type="evidence" value="ECO:0007669"/>
    <property type="project" value="UniProtKB-UniRule"/>
</dbReference>
<dbReference type="GO" id="GO:0008270">
    <property type="term" value="F:zinc ion binding"/>
    <property type="evidence" value="ECO:0007669"/>
    <property type="project" value="UniProtKB-UniRule"/>
</dbReference>
<dbReference type="GO" id="GO:0008616">
    <property type="term" value="P:queuosine biosynthetic process"/>
    <property type="evidence" value="ECO:0007669"/>
    <property type="project" value="UniProtKB-UniRule"/>
</dbReference>
<dbReference type="CDD" id="cd01995">
    <property type="entry name" value="QueC-like"/>
    <property type="match status" value="1"/>
</dbReference>
<dbReference type="Gene3D" id="3.40.50.620">
    <property type="entry name" value="HUPs"/>
    <property type="match status" value="1"/>
</dbReference>
<dbReference type="HAMAP" id="MF_01633">
    <property type="entry name" value="QueC"/>
    <property type="match status" value="1"/>
</dbReference>
<dbReference type="InterPro" id="IPR018317">
    <property type="entry name" value="QueC"/>
</dbReference>
<dbReference type="InterPro" id="IPR014729">
    <property type="entry name" value="Rossmann-like_a/b/a_fold"/>
</dbReference>
<dbReference type="NCBIfam" id="TIGR00364">
    <property type="entry name" value="7-cyano-7-deazaguanine synthase QueC"/>
    <property type="match status" value="1"/>
</dbReference>
<dbReference type="PANTHER" id="PTHR42914">
    <property type="entry name" value="7-CYANO-7-DEAZAGUANINE SYNTHASE"/>
    <property type="match status" value="1"/>
</dbReference>
<dbReference type="PANTHER" id="PTHR42914:SF1">
    <property type="entry name" value="7-CYANO-7-DEAZAGUANINE SYNTHASE"/>
    <property type="match status" value="1"/>
</dbReference>
<dbReference type="Pfam" id="PF06508">
    <property type="entry name" value="QueC"/>
    <property type="match status" value="1"/>
</dbReference>
<dbReference type="PIRSF" id="PIRSF006293">
    <property type="entry name" value="ExsB"/>
    <property type="match status" value="1"/>
</dbReference>
<dbReference type="SUPFAM" id="SSF52402">
    <property type="entry name" value="Adenine nucleotide alpha hydrolases-like"/>
    <property type="match status" value="1"/>
</dbReference>
<feature type="chain" id="PRO_0000246882" description="7-cyano-7-deazaguanine synthase">
    <location>
        <begin position="1"/>
        <end position="224"/>
    </location>
</feature>
<feature type="binding site" evidence="1">
    <location>
        <begin position="12"/>
        <end position="22"/>
    </location>
    <ligand>
        <name>ATP</name>
        <dbReference type="ChEBI" id="CHEBI:30616"/>
    </ligand>
</feature>
<feature type="binding site" evidence="1">
    <location>
        <position position="193"/>
    </location>
    <ligand>
        <name>Zn(2+)</name>
        <dbReference type="ChEBI" id="CHEBI:29105"/>
    </ligand>
</feature>
<feature type="binding site" evidence="1">
    <location>
        <position position="201"/>
    </location>
    <ligand>
        <name>Zn(2+)</name>
        <dbReference type="ChEBI" id="CHEBI:29105"/>
    </ligand>
</feature>
<feature type="binding site" evidence="1">
    <location>
        <position position="204"/>
    </location>
    <ligand>
        <name>Zn(2+)</name>
        <dbReference type="ChEBI" id="CHEBI:29105"/>
    </ligand>
</feature>
<feature type="binding site" evidence="1">
    <location>
        <position position="207"/>
    </location>
    <ligand>
        <name>Zn(2+)</name>
        <dbReference type="ChEBI" id="CHEBI:29105"/>
    </ligand>
</feature>
<name>QUEC_PROMP</name>
<reference key="1">
    <citation type="journal article" date="2003" name="Nature">
        <title>Genome divergence in two Prochlorococcus ecotypes reflects oceanic niche differentiation.</title>
        <authorList>
            <person name="Rocap G."/>
            <person name="Larimer F.W."/>
            <person name="Lamerdin J.E."/>
            <person name="Malfatti S."/>
            <person name="Chain P."/>
            <person name="Ahlgren N.A."/>
            <person name="Arellano A."/>
            <person name="Coleman M."/>
            <person name="Hauser L."/>
            <person name="Hess W.R."/>
            <person name="Johnson Z.I."/>
            <person name="Land M.L."/>
            <person name="Lindell D."/>
            <person name="Post A.F."/>
            <person name="Regala W."/>
            <person name="Shah M."/>
            <person name="Shaw S.L."/>
            <person name="Steglich C."/>
            <person name="Sullivan M.B."/>
            <person name="Ting C.S."/>
            <person name="Tolonen A."/>
            <person name="Webb E.A."/>
            <person name="Zinser E.R."/>
            <person name="Chisholm S.W."/>
        </authorList>
    </citation>
    <scope>NUCLEOTIDE SEQUENCE [LARGE SCALE GENOMIC DNA]</scope>
    <source>
        <strain>CCMP1986 / NIES-2087 / MED4</strain>
    </source>
</reference>
<comment type="function">
    <text evidence="1">Catalyzes the ATP-dependent conversion of 7-carboxy-7-deazaguanine (CDG) to 7-cyano-7-deazaguanine (preQ(0)).</text>
</comment>
<comment type="catalytic activity">
    <reaction evidence="1">
        <text>7-carboxy-7-deazaguanine + NH4(+) + ATP = 7-cyano-7-deazaguanine + ADP + phosphate + H2O + H(+)</text>
        <dbReference type="Rhea" id="RHEA:27982"/>
        <dbReference type="ChEBI" id="CHEBI:15377"/>
        <dbReference type="ChEBI" id="CHEBI:15378"/>
        <dbReference type="ChEBI" id="CHEBI:28938"/>
        <dbReference type="ChEBI" id="CHEBI:30616"/>
        <dbReference type="ChEBI" id="CHEBI:43474"/>
        <dbReference type="ChEBI" id="CHEBI:45075"/>
        <dbReference type="ChEBI" id="CHEBI:61036"/>
        <dbReference type="ChEBI" id="CHEBI:456216"/>
        <dbReference type="EC" id="6.3.4.20"/>
    </reaction>
</comment>
<comment type="cofactor">
    <cofactor evidence="1">
        <name>Zn(2+)</name>
        <dbReference type="ChEBI" id="CHEBI:29105"/>
    </cofactor>
    <text evidence="1">Binds 1 zinc ion per subunit.</text>
</comment>
<comment type="pathway">
    <text evidence="1">Purine metabolism; 7-cyano-7-deazaguanine biosynthesis.</text>
</comment>
<comment type="similarity">
    <text evidence="1">Belongs to the QueC family.</text>
</comment>
<keyword id="KW-0067">ATP-binding</keyword>
<keyword id="KW-0436">Ligase</keyword>
<keyword id="KW-0479">Metal-binding</keyword>
<keyword id="KW-0547">Nucleotide-binding</keyword>
<keyword id="KW-0671">Queuosine biosynthesis</keyword>
<keyword id="KW-0862">Zinc</keyword>